<dbReference type="GO" id="GO:0005576">
    <property type="term" value="C:extracellular region"/>
    <property type="evidence" value="ECO:0007669"/>
    <property type="project" value="UniProtKB-SubCell"/>
</dbReference>
<dbReference type="GO" id="GO:0005179">
    <property type="term" value="F:hormone activity"/>
    <property type="evidence" value="ECO:0007669"/>
    <property type="project" value="UniProtKB-KW"/>
</dbReference>
<dbReference type="GO" id="GO:0007218">
    <property type="term" value="P:neuropeptide signaling pathway"/>
    <property type="evidence" value="ECO:0007669"/>
    <property type="project" value="UniProtKB-KW"/>
</dbReference>
<dbReference type="InterPro" id="IPR002047">
    <property type="entry name" value="Adipokinetic_hormone_CS"/>
</dbReference>
<dbReference type="PROSITE" id="PS00256">
    <property type="entry name" value="AKH"/>
    <property type="match status" value="1"/>
</dbReference>
<evidence type="ECO:0000250" key="1">
    <source>
        <dbReference type="UniProtKB" id="P67790"/>
    </source>
</evidence>
<evidence type="ECO:0000255" key="2"/>
<evidence type="ECO:0000269" key="3">
    <source>
    </source>
</evidence>
<evidence type="ECO:0000303" key="4">
    <source>
    </source>
</evidence>
<evidence type="ECO:0000305" key="5"/>
<reference evidence="5" key="1">
    <citation type="journal article" date="2009" name="BMC Evol. Biol.">
        <title>A proteomic approach for studying insect phylogeny: CAPA peptides of ancient insect taxa (Dictyoptera, Blattoptera) as a test case.</title>
        <authorList>
            <person name="Roth S."/>
            <person name="Fromm B."/>
            <person name="Gaede G."/>
            <person name="Predel R."/>
        </authorList>
    </citation>
    <scope>PROTEIN SEQUENCE</scope>
    <scope>PYROGLUTAMATE FORMATION AT GLN-1</scope>
    <scope>AMIDATION AT GLY-9</scope>
    <source>
        <tissue evidence="3">Corpora cardiaca</tissue>
    </source>
</reference>
<organism>
    <name type="scientific">Rhyparobia maderae</name>
    <name type="common">Madeira cockroach</name>
    <name type="synonym">Leucophaea maderae</name>
    <dbReference type="NCBI Taxonomy" id="36963"/>
    <lineage>
        <taxon>Eukaryota</taxon>
        <taxon>Metazoa</taxon>
        <taxon>Ecdysozoa</taxon>
        <taxon>Arthropoda</taxon>
        <taxon>Hexapoda</taxon>
        <taxon>Insecta</taxon>
        <taxon>Pterygota</taxon>
        <taxon>Neoptera</taxon>
        <taxon>Polyneoptera</taxon>
        <taxon>Dictyoptera</taxon>
        <taxon>Blattodea</taxon>
        <taxon>Blaberoidea</taxon>
        <taxon>Blaberidae</taxon>
        <taxon>Oxyhaloinae</taxon>
        <taxon>Rhyparobia</taxon>
    </lineage>
</organism>
<feature type="peptide" id="PRO_0000378672" description="Hypertrehalosaemic factor 2" evidence="3">
    <location>
        <begin position="1"/>
        <end position="9"/>
    </location>
</feature>
<feature type="modified residue" description="Pyrrolidone carboxylic acid" evidence="3">
    <location>
        <position position="1"/>
    </location>
</feature>
<feature type="modified residue" description="Glycine amide" evidence="3">
    <location>
        <position position="9"/>
    </location>
</feature>
<sequence>QVNFSPGWG</sequence>
<name>HTF2_RHYMA</name>
<keyword id="KW-0027">Amidation</keyword>
<keyword id="KW-0903">Direct protein sequencing</keyword>
<keyword id="KW-0372">Hormone</keyword>
<keyword id="KW-0527">Neuropeptide</keyword>
<keyword id="KW-0873">Pyrrolidone carboxylic acid</keyword>
<keyword id="KW-0964">Secreted</keyword>
<proteinExistence type="evidence at protein level"/>
<accession>P85770</accession>
<comment type="function">
    <text evidence="5">Hypertrehalosaemic factors are neuropeptides that elevate the level of trehalose in the hemolymph (trehalose is the major carbohydrate in the hemolymph of insects).</text>
</comment>
<comment type="subcellular location">
    <subcellularLocation>
        <location evidence="5">Secreted</location>
    </subcellularLocation>
</comment>
<comment type="similarity">
    <text evidence="2">Belongs to the AKH/HRTH/RPCH family.</text>
</comment>
<protein>
    <recommendedName>
        <fullName evidence="1">Hypertrehalosaemic factor 2</fullName>
    </recommendedName>
    <alternativeName>
        <fullName evidence="4">Adipokinetic hormone 1</fullName>
        <shortName evidence="4">RhyMa-AKH-1</shortName>
    </alternativeName>
    <alternativeName>
        <fullName evidence="1">Hypertrehalosaemic neuropeptide 2</fullName>
    </alternativeName>
</protein>